<organism>
    <name type="scientific">Pseudomonas entomophila (strain L48)</name>
    <dbReference type="NCBI Taxonomy" id="384676"/>
    <lineage>
        <taxon>Bacteria</taxon>
        <taxon>Pseudomonadati</taxon>
        <taxon>Pseudomonadota</taxon>
        <taxon>Gammaproteobacteria</taxon>
        <taxon>Pseudomonadales</taxon>
        <taxon>Pseudomonadaceae</taxon>
        <taxon>Pseudomonas</taxon>
    </lineage>
</organism>
<sequence length="85" mass="8608">METVVGLTAIAVALLIGLGALGTAIGFGLLGGKFLEGAARQPEMVPMLQVKMFIVAGLLDAVTMIGVGIALFFTFANPFVGQIAG</sequence>
<accession>Q1I2I2</accession>
<keyword id="KW-0066">ATP synthesis</keyword>
<keyword id="KW-0997">Cell inner membrane</keyword>
<keyword id="KW-1003">Cell membrane</keyword>
<keyword id="KW-0138">CF(0)</keyword>
<keyword id="KW-0375">Hydrogen ion transport</keyword>
<keyword id="KW-0406">Ion transport</keyword>
<keyword id="KW-0446">Lipid-binding</keyword>
<keyword id="KW-0472">Membrane</keyword>
<keyword id="KW-0812">Transmembrane</keyword>
<keyword id="KW-1133">Transmembrane helix</keyword>
<keyword id="KW-0813">Transport</keyword>
<proteinExistence type="inferred from homology"/>
<reference key="1">
    <citation type="journal article" date="2006" name="Nat. Biotechnol.">
        <title>Complete genome sequence of the entomopathogenic and metabolically versatile soil bacterium Pseudomonas entomophila.</title>
        <authorList>
            <person name="Vodovar N."/>
            <person name="Vallenet D."/>
            <person name="Cruveiller S."/>
            <person name="Rouy Z."/>
            <person name="Barbe V."/>
            <person name="Acosta C."/>
            <person name="Cattolico L."/>
            <person name="Jubin C."/>
            <person name="Lajus A."/>
            <person name="Segurens B."/>
            <person name="Vacherie B."/>
            <person name="Wincker P."/>
            <person name="Weissenbach J."/>
            <person name="Lemaitre B."/>
            <person name="Medigue C."/>
            <person name="Boccard F."/>
        </authorList>
    </citation>
    <scope>NUCLEOTIDE SEQUENCE [LARGE SCALE GENOMIC DNA]</scope>
    <source>
        <strain>L48</strain>
    </source>
</reference>
<comment type="function">
    <text evidence="1">F(1)F(0) ATP synthase produces ATP from ADP in the presence of a proton or sodium gradient. F-type ATPases consist of two structural domains, F(1) containing the extramembraneous catalytic core and F(0) containing the membrane proton channel, linked together by a central stalk and a peripheral stalk. During catalysis, ATP synthesis in the catalytic domain of F(1) is coupled via a rotary mechanism of the central stalk subunits to proton translocation.</text>
</comment>
<comment type="function">
    <text evidence="1">Key component of the F(0) channel; it plays a direct role in translocation across the membrane. A homomeric c-ring of between 10-14 subunits forms the central stalk rotor element with the F(1) delta and epsilon subunits.</text>
</comment>
<comment type="subunit">
    <text evidence="1">F-type ATPases have 2 components, F(1) - the catalytic core - and F(0) - the membrane proton channel. F(1) has five subunits: alpha(3), beta(3), gamma(1), delta(1), epsilon(1). F(0) has three main subunits: a(1), b(2) and c(10-14). The alpha and beta chains form an alternating ring which encloses part of the gamma chain. F(1) is attached to F(0) by a central stalk formed by the gamma and epsilon chains, while a peripheral stalk is formed by the delta and b chains.</text>
</comment>
<comment type="subcellular location">
    <subcellularLocation>
        <location evidence="1">Cell inner membrane</location>
        <topology evidence="1">Multi-pass membrane protein</topology>
    </subcellularLocation>
</comment>
<comment type="similarity">
    <text evidence="1">Belongs to the ATPase C chain family.</text>
</comment>
<evidence type="ECO:0000255" key="1">
    <source>
        <dbReference type="HAMAP-Rule" id="MF_01396"/>
    </source>
</evidence>
<protein>
    <recommendedName>
        <fullName evidence="1">ATP synthase subunit c</fullName>
    </recommendedName>
    <alternativeName>
        <fullName evidence="1">ATP synthase F(0) sector subunit c</fullName>
    </alternativeName>
    <alternativeName>
        <fullName evidence="1">F-type ATPase subunit c</fullName>
        <shortName evidence="1">F-ATPase subunit c</shortName>
    </alternativeName>
    <alternativeName>
        <fullName evidence="1">Lipid-binding protein</fullName>
    </alternativeName>
</protein>
<gene>
    <name evidence="1" type="primary">atpE</name>
    <name type="ordered locus">PSEEN5547</name>
</gene>
<name>ATPL_PSEE4</name>
<dbReference type="EMBL" id="CT573326">
    <property type="protein sequence ID" value="CAK18154.1"/>
    <property type="molecule type" value="Genomic_DNA"/>
</dbReference>
<dbReference type="RefSeq" id="WP_003097235.1">
    <property type="nucleotide sequence ID" value="NC_008027.1"/>
</dbReference>
<dbReference type="SMR" id="Q1I2I2"/>
<dbReference type="STRING" id="384676.PSEEN5547"/>
<dbReference type="GeneID" id="98280758"/>
<dbReference type="KEGG" id="pen:PSEEN5547"/>
<dbReference type="eggNOG" id="ENOG5032S3K">
    <property type="taxonomic scope" value="Bacteria"/>
</dbReference>
<dbReference type="HOGENOM" id="CLU_148047_1_0_6"/>
<dbReference type="OrthoDB" id="9811659at2"/>
<dbReference type="Proteomes" id="UP000000658">
    <property type="component" value="Chromosome"/>
</dbReference>
<dbReference type="GO" id="GO:0005886">
    <property type="term" value="C:plasma membrane"/>
    <property type="evidence" value="ECO:0007669"/>
    <property type="project" value="UniProtKB-SubCell"/>
</dbReference>
<dbReference type="GO" id="GO:0045259">
    <property type="term" value="C:proton-transporting ATP synthase complex"/>
    <property type="evidence" value="ECO:0007669"/>
    <property type="project" value="UniProtKB-KW"/>
</dbReference>
<dbReference type="GO" id="GO:0033177">
    <property type="term" value="C:proton-transporting two-sector ATPase complex, proton-transporting domain"/>
    <property type="evidence" value="ECO:0007669"/>
    <property type="project" value="InterPro"/>
</dbReference>
<dbReference type="GO" id="GO:0008289">
    <property type="term" value="F:lipid binding"/>
    <property type="evidence" value="ECO:0007669"/>
    <property type="project" value="UniProtKB-KW"/>
</dbReference>
<dbReference type="GO" id="GO:0046933">
    <property type="term" value="F:proton-transporting ATP synthase activity, rotational mechanism"/>
    <property type="evidence" value="ECO:0007669"/>
    <property type="project" value="UniProtKB-UniRule"/>
</dbReference>
<dbReference type="CDD" id="cd18185">
    <property type="entry name" value="ATP-synt_Fo_c_ATPE"/>
    <property type="match status" value="1"/>
</dbReference>
<dbReference type="FunFam" id="1.20.20.10:FF:000002">
    <property type="entry name" value="ATP synthase subunit c"/>
    <property type="match status" value="1"/>
</dbReference>
<dbReference type="Gene3D" id="1.20.20.10">
    <property type="entry name" value="F1F0 ATP synthase subunit C"/>
    <property type="match status" value="1"/>
</dbReference>
<dbReference type="HAMAP" id="MF_01396">
    <property type="entry name" value="ATP_synth_c_bact"/>
    <property type="match status" value="1"/>
</dbReference>
<dbReference type="InterPro" id="IPR005953">
    <property type="entry name" value="ATP_synth_csu_bac/chlpt"/>
</dbReference>
<dbReference type="InterPro" id="IPR000454">
    <property type="entry name" value="ATP_synth_F0_csu"/>
</dbReference>
<dbReference type="InterPro" id="IPR020537">
    <property type="entry name" value="ATP_synth_F0_csu_DDCD_BS"/>
</dbReference>
<dbReference type="InterPro" id="IPR038662">
    <property type="entry name" value="ATP_synth_F0_csu_sf"/>
</dbReference>
<dbReference type="InterPro" id="IPR002379">
    <property type="entry name" value="ATPase_proteolipid_c-like_dom"/>
</dbReference>
<dbReference type="InterPro" id="IPR035921">
    <property type="entry name" value="F/V-ATP_Csub_sf"/>
</dbReference>
<dbReference type="NCBIfam" id="TIGR01260">
    <property type="entry name" value="ATP_synt_c"/>
    <property type="match status" value="1"/>
</dbReference>
<dbReference type="NCBIfam" id="NF005363">
    <property type="entry name" value="PRK06876.1"/>
    <property type="match status" value="1"/>
</dbReference>
<dbReference type="Pfam" id="PF00137">
    <property type="entry name" value="ATP-synt_C"/>
    <property type="match status" value="1"/>
</dbReference>
<dbReference type="PRINTS" id="PR00124">
    <property type="entry name" value="ATPASEC"/>
</dbReference>
<dbReference type="SUPFAM" id="SSF81333">
    <property type="entry name" value="F1F0 ATP synthase subunit C"/>
    <property type="match status" value="1"/>
</dbReference>
<dbReference type="PROSITE" id="PS00605">
    <property type="entry name" value="ATPASE_C"/>
    <property type="match status" value="1"/>
</dbReference>
<feature type="chain" id="PRO_1000184439" description="ATP synthase subunit c">
    <location>
        <begin position="1"/>
        <end position="85"/>
    </location>
</feature>
<feature type="transmembrane region" description="Helical" evidence="1">
    <location>
        <begin position="10"/>
        <end position="30"/>
    </location>
</feature>
<feature type="transmembrane region" description="Helical" evidence="1">
    <location>
        <begin position="53"/>
        <end position="73"/>
    </location>
</feature>
<feature type="site" description="Reversibly protonated during proton transport" evidence="1">
    <location>
        <position position="60"/>
    </location>
</feature>